<reference key="1">
    <citation type="journal article" date="2011" name="J. Bacteriol.">
        <title>Genome sequence of the plant-pathogenic bacterium Dickeya dadantii 3937.</title>
        <authorList>
            <person name="Glasner J.D."/>
            <person name="Yang C.H."/>
            <person name="Reverchon S."/>
            <person name="Hugouvieux-Cotte-Pattat N."/>
            <person name="Condemine G."/>
            <person name="Bohin J.P."/>
            <person name="Van Gijsegem F."/>
            <person name="Yang S."/>
            <person name="Franza T."/>
            <person name="Expert D."/>
            <person name="Plunkett G. III"/>
            <person name="San Francisco M.J."/>
            <person name="Charkowski A.O."/>
            <person name="Py B."/>
            <person name="Bell K."/>
            <person name="Rauscher L."/>
            <person name="Rodriguez-Palenzuela P."/>
            <person name="Toussaint A."/>
            <person name="Holeva M.C."/>
            <person name="He S.Y."/>
            <person name="Douet V."/>
            <person name="Boccara M."/>
            <person name="Blanco C."/>
            <person name="Toth I."/>
            <person name="Anderson B.D."/>
            <person name="Biehl B.S."/>
            <person name="Mau B."/>
            <person name="Flynn S.M."/>
            <person name="Barras F."/>
            <person name="Lindeberg M."/>
            <person name="Birch P.R."/>
            <person name="Tsuyumu S."/>
            <person name="Shi X."/>
            <person name="Hibbing M."/>
            <person name="Yap M.N."/>
            <person name="Carpentier M."/>
            <person name="Dassa E."/>
            <person name="Umehara M."/>
            <person name="Kim J.F."/>
            <person name="Rusch M."/>
            <person name="Soni P."/>
            <person name="Mayhew G.F."/>
            <person name="Fouts D.E."/>
            <person name="Gill S.R."/>
            <person name="Blattner F.R."/>
            <person name="Keen N.T."/>
            <person name="Perna N.T."/>
        </authorList>
    </citation>
    <scope>NUCLEOTIDE SEQUENCE [LARGE SCALE GENOMIC DNA]</scope>
    <source>
        <strain>3937</strain>
    </source>
</reference>
<reference key="2">
    <citation type="journal article" date="2013" name="Proc. Natl. Acad. Sci. U.S.A.">
        <title>Rhs proteins from diverse bacteria mediate intercellular competition.</title>
        <authorList>
            <person name="Koskiniemi S."/>
            <person name="Lamoureux J.G."/>
            <person name="Nikolakakis K.C."/>
            <person name="t'Kint de Roodenbeke C."/>
            <person name="Kaplan M.D."/>
            <person name="Low D.A."/>
            <person name="Hayes C.S."/>
        </authorList>
    </citation>
    <scope>PROBABLE FUNCTION AS A DNASE</scope>
    <scope>FUNCTION AS A TOXIN</scope>
    <scope>EXPRESSION IN E.COLI</scope>
    <scope>DISRUPTION PHENOTYPE</scope>
    <source>
        <strain>3937</strain>
    </source>
</reference>
<organism>
    <name type="scientific">Dickeya dadantii (strain 3937)</name>
    <name type="common">Erwinia chrysanthemi (strain 3937)</name>
    <dbReference type="NCBI Taxonomy" id="198628"/>
    <lineage>
        <taxon>Bacteria</taxon>
        <taxon>Pseudomonadati</taxon>
        <taxon>Pseudomonadota</taxon>
        <taxon>Gammaproteobacteria</taxon>
        <taxon>Enterobacterales</taxon>
        <taxon>Pectobacteriaceae</taxon>
        <taxon>Dickeya</taxon>
    </lineage>
</organism>
<evidence type="ECO:0000255" key="1"/>
<evidence type="ECO:0000256" key="2">
    <source>
        <dbReference type="SAM" id="MobiDB-lite"/>
    </source>
</evidence>
<evidence type="ECO:0000269" key="3">
    <source>
    </source>
</evidence>
<evidence type="ECO:0000305" key="4"/>
<feature type="chain" id="PRO_0000423973" description="Probable deoxyribonuclease RhsB">
    <location>
        <begin position="1"/>
        <end position="1436"/>
    </location>
</feature>
<feature type="transmembrane region" description="Helical" evidence="1">
    <location>
        <begin position="48"/>
        <end position="68"/>
    </location>
</feature>
<feature type="transmembrane region" description="Helical" evidence="1">
    <location>
        <begin position="70"/>
        <end position="90"/>
    </location>
</feature>
<feature type="repeat" description="YD 1" evidence="1">
    <location>
        <begin position="486"/>
        <end position="521"/>
    </location>
</feature>
<feature type="repeat" description="YD 2" evidence="1">
    <location>
        <begin position="569"/>
        <end position="605"/>
    </location>
</feature>
<feature type="repeat" description="YD 3" evidence="1">
    <location>
        <begin position="612"/>
        <end position="647"/>
    </location>
</feature>
<feature type="repeat" description="YD 4" evidence="1">
    <location>
        <begin position="766"/>
        <end position="799"/>
    </location>
</feature>
<feature type="repeat" description="YD 5" evidence="1">
    <location>
        <begin position="847"/>
        <end position="879"/>
    </location>
</feature>
<feature type="region of interest" description="Disordered" evidence="2">
    <location>
        <begin position="16"/>
        <end position="42"/>
    </location>
</feature>
<gene>
    <name type="primary">rhsB</name>
    <name type="ordered locus">Dda3937_02773</name>
</gene>
<name>RHSB_DICD3</name>
<sequence>MLNDILSRVARVGAMHAGNRPNPPADRPQPCQGKPPTSPGKTIKHKSFLGALAGAVAGALVAAAVAAAAVFLVGVTGGLAVAAVGALAVFAAGDLISAVTNKVSAVVDSASPAFGPVASGSGNVFVEKQPVARATKDTVACTKHNSPQLIAQGSESVFVNDAPAARIDDKTVCGATLKEGASTVFFGSGQGTYLEIADEFSWWEKALLIAVEFLVPPSRGMLKGLGKLFTRNGLKSVLKGAKAGALFITKVPGKMGCAARAFKANKGMARFKEAAKAFKKDPVYLASGEVIESRTDIELGQTLPLVFERTYRSASAHTGLLGRGWHDSWSEVATVTHDGLNTHVVITLAQGYDIDFTFHQDVQAVYCPHYPEFTLHRRGDGFSLWHRDQQTWRDFSVVQGERRLLSAIHDSHDNRIELVRDPKGYLRQLRHSDGVTLLLVWQGEYLHQIQRIDGGQKTLLAEYRQDEQGRLVEANATHAYHLYYEYNTAHRLTRWHDNDQTWARYEYDAQGRCVYTTCADGFLTARFDYLPDRVVMTDGLGQRSEFGFNDLHLMSWEQSPLGHITRYEYDEVGNLLREISPAGRVVEFTYLDDTGRVSTFTDGSGHQWQYDYDDAQRLCGVTDPLGREWGWVYDAEGNPERLTGPDASEVRFTWNRYGLLTQVSDAAGEVQARLQYDHRQRLLSATDAESRTRQLRYDRQDRVVQWQRADGARFRLGYRRASWTLPEQLIRPDDKEEQRQYDRHNNLLSYVDGNGALWRQTFGPFDLLTARTDAEGRTWRYEYDRESQQLIAVTAPDGSRWQWWLDADGRVIRERDMTGTETHYGYDEDGLCIRVRNGEGDTRHFLYDARGLLLRETAPDDTLHYRYDAAGRLTEVSSATAHVQLDYDLRDRVVREWHNGTLLTRQYDDAARTVTRTLTWDGDADDTTGTLAPLTSLFHYTRTGELRQVQLPDGADLTLTHDAAGRESLRTGGSGFVQQREYDVMGWLTREQSGAQHDGRLQPAQTREYRYDGAGNLTGVRHNRDAEGYRLDATGRVQEMLSGGAGKPVDTTARFHYTRTGLPQEAGRLTEWQAGRLVQHDDTHYQYDRAGRLIRKQVVQPGYRPQVWQYRWDSRNQLRVVDTPNGERWLYRYDPFGRRVGKRCDQKAEETRYLWDGDQIAEIRHYRHGQLIQRRHWVYNGWELVVQQRQHTGGDWETDFVTSSQNGTPQALFTPDGTLRWQVPKATLWGQRQTEKSESPDPGLAFAGQLRDSESGLCYNRFRYYDPAGGCYVSPDPIGIAGGESNYGYVQNPNTRVDPLGLAGCAMGEILADADKWSLAKIGDRQKGMIKDKLSTVKERSKALNTKMREHFNANEQKIISEWEKQTGMNWPTLSSGSRATPHHVIPIKNGGSNEWWNIIPVQHPHTGTIHGTGSALRTHLPYQKDGGKLWNLLGY</sequence>
<accession>E0SIS2</accession>
<comment type="function">
    <text evidence="3">Toxic component of a toxin-immunity protein module, which functions as a cellular contact-dependent growth inhibition (CDI) system. This protein may be a nuclease that is specifically inhibited by its cognate immunity protein RhsBI. Upon expression of the C-terminus (residues 1284-1436) in E.coli growth is inhibited, cells elongate, nucleoids condense and plasmid DNA is degraded; these effects are blocked specifically by cognate immunity protein RshIB. Cell contact is necessary for growth inhibition.</text>
</comment>
<comment type="subcellular location">
    <subcellularLocation>
        <location evidence="4">Membrane</location>
        <topology evidence="4">Multi-pass membrane protein</topology>
    </subcellularLocation>
</comment>
<comment type="disruption phenotype">
    <text evidence="3">A double rhsB-rhsIB deletion is outcompeted by wild-type cells, restoration of rhsIB restores normal growth in competition experiments. Restoration of growth requires the RhsB-specific immunity protein, rhsIA does not restore growth.</text>
</comment>
<comment type="similarity">
    <text evidence="4">Belongs to the RHS/WapA nuclease family.</text>
</comment>
<protein>
    <recommendedName>
        <fullName>Probable deoxyribonuclease RhsB</fullName>
        <ecNumber>3.1.-.-</ecNumber>
    </recommendedName>
    <alternativeName>
        <fullName>DNase RhsB</fullName>
    </alternativeName>
    <alternativeName>
        <fullName>Toxin RhsB</fullName>
    </alternativeName>
</protein>
<dbReference type="EC" id="3.1.-.-"/>
<dbReference type="EMBL" id="CP002038">
    <property type="protein sequence ID" value="ADM99131.1"/>
    <property type="molecule type" value="Genomic_DNA"/>
</dbReference>
<dbReference type="RefSeq" id="WP_013318569.1">
    <property type="nucleotide sequence ID" value="NC_014500.1"/>
</dbReference>
<dbReference type="SMR" id="E0SIS2"/>
<dbReference type="STRING" id="198628.Dda3937_02773"/>
<dbReference type="KEGG" id="ddd:Dda3937_02773"/>
<dbReference type="eggNOG" id="COG3209">
    <property type="taxonomic scope" value="Bacteria"/>
</dbReference>
<dbReference type="eggNOG" id="COG4104">
    <property type="taxonomic scope" value="Bacteria"/>
</dbReference>
<dbReference type="HOGENOM" id="CLU_001218_1_8_6"/>
<dbReference type="Proteomes" id="UP000006859">
    <property type="component" value="Chromosome"/>
</dbReference>
<dbReference type="GO" id="GO:0016020">
    <property type="term" value="C:membrane"/>
    <property type="evidence" value="ECO:0007669"/>
    <property type="project" value="UniProtKB-SubCell"/>
</dbReference>
<dbReference type="GO" id="GO:0004518">
    <property type="term" value="F:nuclease activity"/>
    <property type="evidence" value="ECO:0007669"/>
    <property type="project" value="UniProtKB-KW"/>
</dbReference>
<dbReference type="GO" id="GO:0090729">
    <property type="term" value="F:toxin activity"/>
    <property type="evidence" value="ECO:0007669"/>
    <property type="project" value="UniProtKB-KW"/>
</dbReference>
<dbReference type="CDD" id="cd00085">
    <property type="entry name" value="HNHc"/>
    <property type="match status" value="1"/>
</dbReference>
<dbReference type="CDD" id="cd14742">
    <property type="entry name" value="PAAR_RHS"/>
    <property type="match status" value="1"/>
</dbReference>
<dbReference type="Gene3D" id="2.60.200.60">
    <property type="match status" value="1"/>
</dbReference>
<dbReference type="Gene3D" id="2.180.10.10">
    <property type="entry name" value="RHS repeat-associated core"/>
    <property type="match status" value="2"/>
</dbReference>
<dbReference type="InterPro" id="IPR045351">
    <property type="entry name" value="DUF6531"/>
</dbReference>
<dbReference type="InterPro" id="IPR003615">
    <property type="entry name" value="HNH_nuc"/>
</dbReference>
<dbReference type="InterPro" id="IPR008727">
    <property type="entry name" value="PAAR_motif"/>
</dbReference>
<dbReference type="InterPro" id="IPR022385">
    <property type="entry name" value="Rhs_assc_core"/>
</dbReference>
<dbReference type="InterPro" id="IPR031325">
    <property type="entry name" value="RHS_repeat"/>
</dbReference>
<dbReference type="InterPro" id="IPR050708">
    <property type="entry name" value="T6SS_VgrG/RHS"/>
</dbReference>
<dbReference type="InterPro" id="IPR006530">
    <property type="entry name" value="YD"/>
</dbReference>
<dbReference type="NCBIfam" id="TIGR03696">
    <property type="entry name" value="Rhs_assc_core"/>
    <property type="match status" value="1"/>
</dbReference>
<dbReference type="NCBIfam" id="TIGR01643">
    <property type="entry name" value="YD_repeat_2x"/>
    <property type="match status" value="8"/>
</dbReference>
<dbReference type="PANTHER" id="PTHR32305">
    <property type="match status" value="1"/>
</dbReference>
<dbReference type="PANTHER" id="PTHR32305:SF15">
    <property type="entry name" value="PROTEIN RHSA-RELATED"/>
    <property type="match status" value="1"/>
</dbReference>
<dbReference type="Pfam" id="PF20148">
    <property type="entry name" value="DUF6531"/>
    <property type="match status" value="1"/>
</dbReference>
<dbReference type="Pfam" id="PF05488">
    <property type="entry name" value="PAAR_motif"/>
    <property type="match status" value="1"/>
</dbReference>
<dbReference type="Pfam" id="PF05593">
    <property type="entry name" value="RHS_repeat"/>
    <property type="match status" value="7"/>
</dbReference>
<dbReference type="SUPFAM" id="SSF69304">
    <property type="entry name" value="Tricorn protease N-terminal domain"/>
    <property type="match status" value="1"/>
</dbReference>
<keyword id="KW-0378">Hydrolase</keyword>
<keyword id="KW-0472">Membrane</keyword>
<keyword id="KW-0540">Nuclease</keyword>
<keyword id="KW-1185">Reference proteome</keyword>
<keyword id="KW-0677">Repeat</keyword>
<keyword id="KW-0800">Toxin</keyword>
<keyword id="KW-0812">Transmembrane</keyword>
<keyword id="KW-1133">Transmembrane helix</keyword>
<keyword id="KW-0843">Virulence</keyword>
<proteinExistence type="evidence at protein level"/>